<accession>Q6G986</accession>
<gene>
    <name evidence="1" type="primary">cmk</name>
    <name type="ordered locus">SAS1418</name>
</gene>
<evidence type="ECO:0000255" key="1">
    <source>
        <dbReference type="HAMAP-Rule" id="MF_00238"/>
    </source>
</evidence>
<name>KCY_STAAS</name>
<organism>
    <name type="scientific">Staphylococcus aureus (strain MSSA476)</name>
    <dbReference type="NCBI Taxonomy" id="282459"/>
    <lineage>
        <taxon>Bacteria</taxon>
        <taxon>Bacillati</taxon>
        <taxon>Bacillota</taxon>
        <taxon>Bacilli</taxon>
        <taxon>Bacillales</taxon>
        <taxon>Staphylococcaceae</taxon>
        <taxon>Staphylococcus</taxon>
    </lineage>
</organism>
<sequence>MKAINIALDGPAAAGKSTIAKRVASELSMIYVDTGAMYRALTYKYLKLNKTEDFAKLVDQTTLDLTYKADKGQCVILDNEDVTDFLRNNDVTQHVSYVASKEPVRSFAVKKQKELAAEKGIVMDGRDIGTVVLPDADLKVYMIASVEERAERRYKDNQLRGIESNFEDLKRDIEARDQYDMNREISPLRKADDAVTLDTTGKSIEEVTDEILAMVSQIK</sequence>
<dbReference type="EC" id="2.7.4.25" evidence="1"/>
<dbReference type="EMBL" id="BX571857">
    <property type="protein sequence ID" value="CAG43195.1"/>
    <property type="molecule type" value="Genomic_DNA"/>
</dbReference>
<dbReference type="RefSeq" id="WP_000644391.1">
    <property type="nucleotide sequence ID" value="NC_002953.3"/>
</dbReference>
<dbReference type="SMR" id="Q6G986"/>
<dbReference type="KEGG" id="sas:SAS1418"/>
<dbReference type="HOGENOM" id="CLU_079959_0_2_9"/>
<dbReference type="GO" id="GO:0005829">
    <property type="term" value="C:cytosol"/>
    <property type="evidence" value="ECO:0007669"/>
    <property type="project" value="TreeGrafter"/>
</dbReference>
<dbReference type="GO" id="GO:0005524">
    <property type="term" value="F:ATP binding"/>
    <property type="evidence" value="ECO:0007669"/>
    <property type="project" value="UniProtKB-UniRule"/>
</dbReference>
<dbReference type="GO" id="GO:0036430">
    <property type="term" value="F:CMP kinase activity"/>
    <property type="evidence" value="ECO:0007669"/>
    <property type="project" value="RHEA"/>
</dbReference>
<dbReference type="GO" id="GO:0036431">
    <property type="term" value="F:dCMP kinase activity"/>
    <property type="evidence" value="ECO:0007669"/>
    <property type="project" value="RHEA"/>
</dbReference>
<dbReference type="GO" id="GO:0015949">
    <property type="term" value="P:nucleobase-containing small molecule interconversion"/>
    <property type="evidence" value="ECO:0007669"/>
    <property type="project" value="TreeGrafter"/>
</dbReference>
<dbReference type="GO" id="GO:0006220">
    <property type="term" value="P:pyrimidine nucleotide metabolic process"/>
    <property type="evidence" value="ECO:0007669"/>
    <property type="project" value="UniProtKB-UniRule"/>
</dbReference>
<dbReference type="CDD" id="cd02020">
    <property type="entry name" value="CMPK"/>
    <property type="match status" value="1"/>
</dbReference>
<dbReference type="Gene3D" id="3.40.50.300">
    <property type="entry name" value="P-loop containing nucleotide triphosphate hydrolases"/>
    <property type="match status" value="1"/>
</dbReference>
<dbReference type="HAMAP" id="MF_00238">
    <property type="entry name" value="Cytidyl_kinase_type1"/>
    <property type="match status" value="1"/>
</dbReference>
<dbReference type="InterPro" id="IPR003136">
    <property type="entry name" value="Cytidylate_kin"/>
</dbReference>
<dbReference type="InterPro" id="IPR011994">
    <property type="entry name" value="Cytidylate_kinase_dom"/>
</dbReference>
<dbReference type="InterPro" id="IPR027417">
    <property type="entry name" value="P-loop_NTPase"/>
</dbReference>
<dbReference type="NCBIfam" id="TIGR00017">
    <property type="entry name" value="cmk"/>
    <property type="match status" value="1"/>
</dbReference>
<dbReference type="PANTHER" id="PTHR21299:SF2">
    <property type="entry name" value="CYTIDYLATE KINASE"/>
    <property type="match status" value="1"/>
</dbReference>
<dbReference type="PANTHER" id="PTHR21299">
    <property type="entry name" value="CYTIDYLATE KINASE/PANTOATE-BETA-ALANINE LIGASE"/>
    <property type="match status" value="1"/>
</dbReference>
<dbReference type="Pfam" id="PF02224">
    <property type="entry name" value="Cytidylate_kin"/>
    <property type="match status" value="1"/>
</dbReference>
<dbReference type="SUPFAM" id="SSF52540">
    <property type="entry name" value="P-loop containing nucleoside triphosphate hydrolases"/>
    <property type="match status" value="1"/>
</dbReference>
<comment type="catalytic activity">
    <reaction evidence="1">
        <text>CMP + ATP = CDP + ADP</text>
        <dbReference type="Rhea" id="RHEA:11600"/>
        <dbReference type="ChEBI" id="CHEBI:30616"/>
        <dbReference type="ChEBI" id="CHEBI:58069"/>
        <dbReference type="ChEBI" id="CHEBI:60377"/>
        <dbReference type="ChEBI" id="CHEBI:456216"/>
        <dbReference type="EC" id="2.7.4.25"/>
    </reaction>
</comment>
<comment type="catalytic activity">
    <reaction evidence="1">
        <text>dCMP + ATP = dCDP + ADP</text>
        <dbReference type="Rhea" id="RHEA:25094"/>
        <dbReference type="ChEBI" id="CHEBI:30616"/>
        <dbReference type="ChEBI" id="CHEBI:57566"/>
        <dbReference type="ChEBI" id="CHEBI:58593"/>
        <dbReference type="ChEBI" id="CHEBI:456216"/>
        <dbReference type="EC" id="2.7.4.25"/>
    </reaction>
</comment>
<comment type="subcellular location">
    <subcellularLocation>
        <location evidence="1">Cytoplasm</location>
    </subcellularLocation>
</comment>
<comment type="similarity">
    <text evidence="1">Belongs to the cytidylate kinase family. Type 1 subfamily.</text>
</comment>
<protein>
    <recommendedName>
        <fullName evidence="1">Cytidylate kinase</fullName>
        <shortName evidence="1">CK</shortName>
        <ecNumber evidence="1">2.7.4.25</ecNumber>
    </recommendedName>
    <alternativeName>
        <fullName evidence="1">Cytidine monophosphate kinase</fullName>
        <shortName evidence="1">CMP kinase</shortName>
    </alternativeName>
</protein>
<feature type="chain" id="PRO_0000131976" description="Cytidylate kinase">
    <location>
        <begin position="1"/>
        <end position="219"/>
    </location>
</feature>
<feature type="binding site" evidence="1">
    <location>
        <begin position="10"/>
        <end position="18"/>
    </location>
    <ligand>
        <name>ATP</name>
        <dbReference type="ChEBI" id="CHEBI:30616"/>
    </ligand>
</feature>
<proteinExistence type="inferred from homology"/>
<reference key="1">
    <citation type="journal article" date="2004" name="Proc. Natl. Acad. Sci. U.S.A.">
        <title>Complete genomes of two clinical Staphylococcus aureus strains: evidence for the rapid evolution of virulence and drug resistance.</title>
        <authorList>
            <person name="Holden M.T.G."/>
            <person name="Feil E.J."/>
            <person name="Lindsay J.A."/>
            <person name="Peacock S.J."/>
            <person name="Day N.P.J."/>
            <person name="Enright M.C."/>
            <person name="Foster T.J."/>
            <person name="Moore C.E."/>
            <person name="Hurst L."/>
            <person name="Atkin R."/>
            <person name="Barron A."/>
            <person name="Bason N."/>
            <person name="Bentley S.D."/>
            <person name="Chillingworth C."/>
            <person name="Chillingworth T."/>
            <person name="Churcher C."/>
            <person name="Clark L."/>
            <person name="Corton C."/>
            <person name="Cronin A."/>
            <person name="Doggett J."/>
            <person name="Dowd L."/>
            <person name="Feltwell T."/>
            <person name="Hance Z."/>
            <person name="Harris B."/>
            <person name="Hauser H."/>
            <person name="Holroyd S."/>
            <person name="Jagels K."/>
            <person name="James K.D."/>
            <person name="Lennard N."/>
            <person name="Line A."/>
            <person name="Mayes R."/>
            <person name="Moule S."/>
            <person name="Mungall K."/>
            <person name="Ormond D."/>
            <person name="Quail M.A."/>
            <person name="Rabbinowitsch E."/>
            <person name="Rutherford K.M."/>
            <person name="Sanders M."/>
            <person name="Sharp S."/>
            <person name="Simmonds M."/>
            <person name="Stevens K."/>
            <person name="Whitehead S."/>
            <person name="Barrell B.G."/>
            <person name="Spratt B.G."/>
            <person name="Parkhill J."/>
        </authorList>
    </citation>
    <scope>NUCLEOTIDE SEQUENCE [LARGE SCALE GENOMIC DNA]</scope>
    <source>
        <strain>MSSA476</strain>
    </source>
</reference>
<keyword id="KW-0067">ATP-binding</keyword>
<keyword id="KW-0963">Cytoplasm</keyword>
<keyword id="KW-0418">Kinase</keyword>
<keyword id="KW-0547">Nucleotide-binding</keyword>
<keyword id="KW-0808">Transferase</keyword>